<name>RPOZ_CORU7</name>
<reference key="1">
    <citation type="journal article" date="2008" name="J. Biotechnol.">
        <title>The lifestyle of Corynebacterium urealyticum derived from its complete genome sequence established by pyrosequencing.</title>
        <authorList>
            <person name="Tauch A."/>
            <person name="Trost E."/>
            <person name="Tilker A."/>
            <person name="Ludewig U."/>
            <person name="Schneiker S."/>
            <person name="Goesmann A."/>
            <person name="Arnold W."/>
            <person name="Bekel T."/>
            <person name="Brinkrolf K."/>
            <person name="Brune I."/>
            <person name="Goetker S."/>
            <person name="Kalinowski J."/>
            <person name="Kamp P.-B."/>
            <person name="Lobo F.P."/>
            <person name="Viehoever P."/>
            <person name="Weisshaar B."/>
            <person name="Soriano F."/>
            <person name="Droege M."/>
            <person name="Puehler A."/>
        </authorList>
    </citation>
    <scope>NUCLEOTIDE SEQUENCE [LARGE SCALE GENOMIC DNA]</scope>
    <source>
        <strain>ATCC 43042 / DSM 7109</strain>
    </source>
</reference>
<organism>
    <name type="scientific">Corynebacterium urealyticum (strain ATCC 43042 / DSM 7109)</name>
    <dbReference type="NCBI Taxonomy" id="504474"/>
    <lineage>
        <taxon>Bacteria</taxon>
        <taxon>Bacillati</taxon>
        <taxon>Actinomycetota</taxon>
        <taxon>Actinomycetes</taxon>
        <taxon>Mycobacteriales</taxon>
        <taxon>Corynebacteriaceae</taxon>
        <taxon>Corynebacterium</taxon>
    </lineage>
</organism>
<accession>B1VDN5</accession>
<comment type="function">
    <text evidence="1">Promotes RNA polymerase assembly. Latches the N- and C-terminal regions of the beta' subunit thereby facilitating its interaction with the beta and alpha subunits.</text>
</comment>
<comment type="catalytic activity">
    <reaction evidence="1">
        <text>RNA(n) + a ribonucleoside 5'-triphosphate = RNA(n+1) + diphosphate</text>
        <dbReference type="Rhea" id="RHEA:21248"/>
        <dbReference type="Rhea" id="RHEA-COMP:14527"/>
        <dbReference type="Rhea" id="RHEA-COMP:17342"/>
        <dbReference type="ChEBI" id="CHEBI:33019"/>
        <dbReference type="ChEBI" id="CHEBI:61557"/>
        <dbReference type="ChEBI" id="CHEBI:140395"/>
        <dbReference type="EC" id="2.7.7.6"/>
    </reaction>
</comment>
<comment type="subunit">
    <text evidence="1">The RNAP catalytic core consists of 2 alpha, 1 beta, 1 beta' and 1 omega subunit. When a sigma factor is associated with the core the holoenzyme is formed, which can initiate transcription.</text>
</comment>
<comment type="similarity">
    <text evidence="1">Belongs to the RNA polymerase subunit omega family.</text>
</comment>
<proteinExistence type="inferred from homology"/>
<dbReference type="EC" id="2.7.7.6" evidence="1"/>
<dbReference type="EMBL" id="AM942444">
    <property type="protein sequence ID" value="CAQ04933.1"/>
    <property type="molecule type" value="Genomic_DNA"/>
</dbReference>
<dbReference type="RefSeq" id="WP_012360221.1">
    <property type="nucleotide sequence ID" value="NC_010545.1"/>
</dbReference>
<dbReference type="SMR" id="B1VDN5"/>
<dbReference type="STRING" id="504474.cu0973"/>
<dbReference type="GeneID" id="60603752"/>
<dbReference type="KEGG" id="cur:cu0973"/>
<dbReference type="eggNOG" id="COG1758">
    <property type="taxonomic scope" value="Bacteria"/>
</dbReference>
<dbReference type="HOGENOM" id="CLU_125406_1_1_11"/>
<dbReference type="Proteomes" id="UP000001727">
    <property type="component" value="Chromosome"/>
</dbReference>
<dbReference type="GO" id="GO:0000428">
    <property type="term" value="C:DNA-directed RNA polymerase complex"/>
    <property type="evidence" value="ECO:0007669"/>
    <property type="project" value="UniProtKB-KW"/>
</dbReference>
<dbReference type="GO" id="GO:0003677">
    <property type="term" value="F:DNA binding"/>
    <property type="evidence" value="ECO:0007669"/>
    <property type="project" value="UniProtKB-UniRule"/>
</dbReference>
<dbReference type="GO" id="GO:0003899">
    <property type="term" value="F:DNA-directed RNA polymerase activity"/>
    <property type="evidence" value="ECO:0007669"/>
    <property type="project" value="UniProtKB-UniRule"/>
</dbReference>
<dbReference type="GO" id="GO:0006351">
    <property type="term" value="P:DNA-templated transcription"/>
    <property type="evidence" value="ECO:0007669"/>
    <property type="project" value="UniProtKB-UniRule"/>
</dbReference>
<dbReference type="Gene3D" id="3.90.940.10">
    <property type="match status" value="1"/>
</dbReference>
<dbReference type="HAMAP" id="MF_00366">
    <property type="entry name" value="RNApol_bact_RpoZ"/>
    <property type="match status" value="1"/>
</dbReference>
<dbReference type="InterPro" id="IPR003716">
    <property type="entry name" value="DNA-dir_RNA_pol_omega"/>
</dbReference>
<dbReference type="InterPro" id="IPR006110">
    <property type="entry name" value="Pol_omega/Rpo6/RPB6"/>
</dbReference>
<dbReference type="InterPro" id="IPR036161">
    <property type="entry name" value="RPB6/omega-like_sf"/>
</dbReference>
<dbReference type="NCBIfam" id="TIGR00690">
    <property type="entry name" value="rpoZ"/>
    <property type="match status" value="1"/>
</dbReference>
<dbReference type="PANTHER" id="PTHR34476">
    <property type="entry name" value="DNA-DIRECTED RNA POLYMERASE SUBUNIT OMEGA"/>
    <property type="match status" value="1"/>
</dbReference>
<dbReference type="PANTHER" id="PTHR34476:SF1">
    <property type="entry name" value="DNA-DIRECTED RNA POLYMERASE SUBUNIT OMEGA"/>
    <property type="match status" value="1"/>
</dbReference>
<dbReference type="Pfam" id="PF01192">
    <property type="entry name" value="RNA_pol_Rpb6"/>
    <property type="match status" value="1"/>
</dbReference>
<dbReference type="SMART" id="SM01409">
    <property type="entry name" value="RNA_pol_Rpb6"/>
    <property type="match status" value="1"/>
</dbReference>
<dbReference type="SUPFAM" id="SSF63562">
    <property type="entry name" value="RPB6/omega subunit-like"/>
    <property type="match status" value="1"/>
</dbReference>
<gene>
    <name evidence="1" type="primary">rpoZ</name>
    <name type="ordered locus">cu0973</name>
</gene>
<feature type="chain" id="PRO_1000121205" description="DNA-directed RNA polymerase subunit omega">
    <location>
        <begin position="1"/>
        <end position="93"/>
    </location>
</feature>
<evidence type="ECO:0000255" key="1">
    <source>
        <dbReference type="HAMAP-Rule" id="MF_00366"/>
    </source>
</evidence>
<sequence>MENQDVNSNETVFDPPVGITNPPIDELLTKVSSKYALAIFAAKRARQINDYFQSIDEGVLEFVGPLVTPEMHEKPLSIALREINADLLEHTEG</sequence>
<keyword id="KW-0240">DNA-directed RNA polymerase</keyword>
<keyword id="KW-0548">Nucleotidyltransferase</keyword>
<keyword id="KW-1185">Reference proteome</keyword>
<keyword id="KW-0804">Transcription</keyword>
<keyword id="KW-0808">Transferase</keyword>
<protein>
    <recommendedName>
        <fullName evidence="1">DNA-directed RNA polymerase subunit omega</fullName>
        <shortName evidence="1">RNAP omega subunit</shortName>
        <ecNumber evidence="1">2.7.7.6</ecNumber>
    </recommendedName>
    <alternativeName>
        <fullName evidence="1">RNA polymerase omega subunit</fullName>
    </alternativeName>
    <alternativeName>
        <fullName evidence="1">Transcriptase subunit omega</fullName>
    </alternativeName>
</protein>